<name>JMY_MOUSE</name>
<protein>
    <recommendedName>
        <fullName>Junction-mediating and -regulatory protein</fullName>
    </recommendedName>
</protein>
<accession>Q9QXM1</accession>
<accession>Q3UQZ0</accession>
<accession>Q5BL16</accession>
<accession>Q6NST0</accession>
<accession>Q8CBP9</accession>
<accession>Q8VDZ3</accession>
<gene>
    <name type="primary">Jmy</name>
</gene>
<evidence type="ECO:0000250" key="1"/>
<evidence type="ECO:0000250" key="2">
    <source>
        <dbReference type="UniProtKB" id="Q8N9B5"/>
    </source>
</evidence>
<evidence type="ECO:0000255" key="3"/>
<evidence type="ECO:0000255" key="4">
    <source>
        <dbReference type="PROSITE-ProRule" id="PRU00406"/>
    </source>
</evidence>
<evidence type="ECO:0000256" key="5">
    <source>
        <dbReference type="SAM" id="MobiDB-lite"/>
    </source>
</evidence>
<evidence type="ECO:0000269" key="6">
    <source>
    </source>
</evidence>
<evidence type="ECO:0000269" key="7">
    <source>
    </source>
</evidence>
<evidence type="ECO:0000269" key="8">
    <source>
    </source>
</evidence>
<evidence type="ECO:0000269" key="9">
    <source>
    </source>
</evidence>
<evidence type="ECO:0000269" key="10">
    <source>
    </source>
</evidence>
<evidence type="ECO:0000303" key="11">
    <source>
    </source>
</evidence>
<evidence type="ECO:0000305" key="12"/>
<evidence type="ECO:0007744" key="13">
    <source>
    </source>
</evidence>
<reference key="1">
    <citation type="journal article" date="1999" name="Mol. Cell">
        <title>A novel cofactor for p300 that regulates the p53 response.</title>
        <authorList>
            <person name="Shikama N."/>
            <person name="Lee C.-W."/>
            <person name="France S."/>
            <person name="Delavaine L."/>
            <person name="Lyon J."/>
            <person name="Krstic-Demonacos M."/>
            <person name="La Thangue N.B."/>
        </authorList>
    </citation>
    <scope>NUCLEOTIDE SEQUENCE [MRNA] (ISOFORM 1)</scope>
    <scope>FUNCTION</scope>
    <scope>INTERACTION WITH EP300</scope>
    <scope>TISSUE SPECIFICITY</scope>
</reference>
<reference key="2">
    <citation type="journal article" date="2004" name="Genome Res.">
        <title>The status, quality, and expansion of the NIH full-length cDNA project: the Mammalian Gene Collection (MGC).</title>
        <authorList>
            <consortium name="The MGC Project Team"/>
        </authorList>
    </citation>
    <scope>NUCLEOTIDE SEQUENCE [LARGE SCALE MRNA] (ISOFORMS 1 AND 2)</scope>
    <source>
        <strain>C57BL/6J</strain>
        <strain>FVB/N</strain>
        <tissue>Brain</tissue>
        <tissue>Mammary tumor</tissue>
    </source>
</reference>
<reference key="3">
    <citation type="journal article" date="2005" name="Science">
        <title>The transcriptional landscape of the mammalian genome.</title>
        <authorList>
            <person name="Carninci P."/>
            <person name="Kasukawa T."/>
            <person name="Katayama S."/>
            <person name="Gough J."/>
            <person name="Frith M.C."/>
            <person name="Maeda N."/>
            <person name="Oyama R."/>
            <person name="Ravasi T."/>
            <person name="Lenhard B."/>
            <person name="Wells C."/>
            <person name="Kodzius R."/>
            <person name="Shimokawa K."/>
            <person name="Bajic V.B."/>
            <person name="Brenner S.E."/>
            <person name="Batalov S."/>
            <person name="Forrest A.R."/>
            <person name="Zavolan M."/>
            <person name="Davis M.J."/>
            <person name="Wilming L.G."/>
            <person name="Aidinis V."/>
            <person name="Allen J.E."/>
            <person name="Ambesi-Impiombato A."/>
            <person name="Apweiler R."/>
            <person name="Aturaliya R.N."/>
            <person name="Bailey T.L."/>
            <person name="Bansal M."/>
            <person name="Baxter L."/>
            <person name="Beisel K.W."/>
            <person name="Bersano T."/>
            <person name="Bono H."/>
            <person name="Chalk A.M."/>
            <person name="Chiu K.P."/>
            <person name="Choudhary V."/>
            <person name="Christoffels A."/>
            <person name="Clutterbuck D.R."/>
            <person name="Crowe M.L."/>
            <person name="Dalla E."/>
            <person name="Dalrymple B.P."/>
            <person name="de Bono B."/>
            <person name="Della Gatta G."/>
            <person name="di Bernardo D."/>
            <person name="Down T."/>
            <person name="Engstrom P."/>
            <person name="Fagiolini M."/>
            <person name="Faulkner G."/>
            <person name="Fletcher C.F."/>
            <person name="Fukushima T."/>
            <person name="Furuno M."/>
            <person name="Futaki S."/>
            <person name="Gariboldi M."/>
            <person name="Georgii-Hemming P."/>
            <person name="Gingeras T.R."/>
            <person name="Gojobori T."/>
            <person name="Green R.E."/>
            <person name="Gustincich S."/>
            <person name="Harbers M."/>
            <person name="Hayashi Y."/>
            <person name="Hensch T.K."/>
            <person name="Hirokawa N."/>
            <person name="Hill D."/>
            <person name="Huminiecki L."/>
            <person name="Iacono M."/>
            <person name="Ikeo K."/>
            <person name="Iwama A."/>
            <person name="Ishikawa T."/>
            <person name="Jakt M."/>
            <person name="Kanapin A."/>
            <person name="Katoh M."/>
            <person name="Kawasawa Y."/>
            <person name="Kelso J."/>
            <person name="Kitamura H."/>
            <person name="Kitano H."/>
            <person name="Kollias G."/>
            <person name="Krishnan S.P."/>
            <person name="Kruger A."/>
            <person name="Kummerfeld S.K."/>
            <person name="Kurochkin I.V."/>
            <person name="Lareau L.F."/>
            <person name="Lazarevic D."/>
            <person name="Lipovich L."/>
            <person name="Liu J."/>
            <person name="Liuni S."/>
            <person name="McWilliam S."/>
            <person name="Madan Babu M."/>
            <person name="Madera M."/>
            <person name="Marchionni L."/>
            <person name="Matsuda H."/>
            <person name="Matsuzawa S."/>
            <person name="Miki H."/>
            <person name="Mignone F."/>
            <person name="Miyake S."/>
            <person name="Morris K."/>
            <person name="Mottagui-Tabar S."/>
            <person name="Mulder N."/>
            <person name="Nakano N."/>
            <person name="Nakauchi H."/>
            <person name="Ng P."/>
            <person name="Nilsson R."/>
            <person name="Nishiguchi S."/>
            <person name="Nishikawa S."/>
            <person name="Nori F."/>
            <person name="Ohara O."/>
            <person name="Okazaki Y."/>
            <person name="Orlando V."/>
            <person name="Pang K.C."/>
            <person name="Pavan W.J."/>
            <person name="Pavesi G."/>
            <person name="Pesole G."/>
            <person name="Petrovsky N."/>
            <person name="Piazza S."/>
            <person name="Reed J."/>
            <person name="Reid J.F."/>
            <person name="Ring B.Z."/>
            <person name="Ringwald M."/>
            <person name="Rost B."/>
            <person name="Ruan Y."/>
            <person name="Salzberg S.L."/>
            <person name="Sandelin A."/>
            <person name="Schneider C."/>
            <person name="Schoenbach C."/>
            <person name="Sekiguchi K."/>
            <person name="Semple C.A."/>
            <person name="Seno S."/>
            <person name="Sessa L."/>
            <person name="Sheng Y."/>
            <person name="Shibata Y."/>
            <person name="Shimada H."/>
            <person name="Shimada K."/>
            <person name="Silva D."/>
            <person name="Sinclair B."/>
            <person name="Sperling S."/>
            <person name="Stupka E."/>
            <person name="Sugiura K."/>
            <person name="Sultana R."/>
            <person name="Takenaka Y."/>
            <person name="Taki K."/>
            <person name="Tammoja K."/>
            <person name="Tan S.L."/>
            <person name="Tang S."/>
            <person name="Taylor M.S."/>
            <person name="Tegner J."/>
            <person name="Teichmann S.A."/>
            <person name="Ueda H.R."/>
            <person name="van Nimwegen E."/>
            <person name="Verardo R."/>
            <person name="Wei C.L."/>
            <person name="Yagi K."/>
            <person name="Yamanishi H."/>
            <person name="Zabarovsky E."/>
            <person name="Zhu S."/>
            <person name="Zimmer A."/>
            <person name="Hide W."/>
            <person name="Bult C."/>
            <person name="Grimmond S.M."/>
            <person name="Teasdale R.D."/>
            <person name="Liu E.T."/>
            <person name="Brusic V."/>
            <person name="Quackenbush J."/>
            <person name="Wahlestedt C."/>
            <person name="Mattick J.S."/>
            <person name="Hume D.A."/>
            <person name="Kai C."/>
            <person name="Sasaki D."/>
            <person name="Tomaru Y."/>
            <person name="Fukuda S."/>
            <person name="Kanamori-Katayama M."/>
            <person name="Suzuki M."/>
            <person name="Aoki J."/>
            <person name="Arakawa T."/>
            <person name="Iida J."/>
            <person name="Imamura K."/>
            <person name="Itoh M."/>
            <person name="Kato T."/>
            <person name="Kawaji H."/>
            <person name="Kawagashira N."/>
            <person name="Kawashima T."/>
            <person name="Kojima M."/>
            <person name="Kondo S."/>
            <person name="Konno H."/>
            <person name="Nakano K."/>
            <person name="Ninomiya N."/>
            <person name="Nishio T."/>
            <person name="Okada M."/>
            <person name="Plessy C."/>
            <person name="Shibata K."/>
            <person name="Shiraki T."/>
            <person name="Suzuki S."/>
            <person name="Tagami M."/>
            <person name="Waki K."/>
            <person name="Watahiki A."/>
            <person name="Okamura-Oho Y."/>
            <person name="Suzuki H."/>
            <person name="Kawai J."/>
            <person name="Hayashizaki Y."/>
        </authorList>
    </citation>
    <scope>NUCLEOTIDE SEQUENCE [LARGE SCALE MRNA] OF 1-555 AND 940-983 (ISOFORM 1)</scope>
    <source>
        <strain>C57BL/6J</strain>
        <tissue>Spinal ganglion</tissue>
        <tissue>Urinary bladder</tissue>
    </source>
</reference>
<reference key="4">
    <citation type="journal article" date="2001" name="Mol. Cell">
        <title>A TPR motif cofactor contributes to p300 activity in the p53 response.</title>
        <authorList>
            <person name="Demonacos C."/>
            <person name="Krstic-Demonacos M."/>
            <person name="La Thangue N.B."/>
        </authorList>
    </citation>
    <scope>FUNCTION</scope>
    <scope>ALTERNATIVE SPLICING (ISOFORM 3)</scope>
    <scope>INTERACTION WITH TTC5 AND EP300</scope>
</reference>
<reference key="5">
    <citation type="journal article" date="2007" name="EMBO Rep.">
        <title>Mdm2 targets the p53 transcription cofactor JMY for degradation.</title>
        <authorList>
            <person name="Coutts A.S."/>
            <person name="Boulahbel H."/>
            <person name="Graham A."/>
            <person name="La Thangue N.B."/>
        </authorList>
    </citation>
    <scope>UBIQUITINATION</scope>
    <scope>INDUCTION</scope>
</reference>
<reference key="6">
    <citation type="journal article" date="2007" name="Proc. Natl. Acad. Sci. U.S.A.">
        <title>Large-scale phosphorylation analysis of mouse liver.</title>
        <authorList>
            <person name="Villen J."/>
            <person name="Beausoleil S.A."/>
            <person name="Gerber S.A."/>
            <person name="Gygi S.P."/>
        </authorList>
    </citation>
    <scope>IDENTIFICATION BY MASS SPECTROMETRY [LARGE SCALE ANALYSIS]</scope>
    <source>
        <tissue>Liver</tissue>
    </source>
</reference>
<reference key="7">
    <citation type="journal article" date="2009" name="Nat. Cell Biol.">
        <title>p53-cofactor JMY is a multifunctional actin nucleation factor.</title>
        <authorList>
            <person name="Zuchero J.B."/>
            <person name="Coutts A.S."/>
            <person name="Quinlan M.E."/>
            <person name="Thangue N.B."/>
            <person name="Mullins R.D."/>
        </authorList>
    </citation>
    <scope>FUNCTION</scope>
    <scope>SUBCELLULAR LOCATION</scope>
    <scope>MUTAGENESIS OF TRP-981</scope>
</reference>
<reference key="8">
    <citation type="journal article" date="2009" name="Proc. Natl. Acad. Sci. U.S.A.">
        <title>A transcription co-factor integrates cell adhesion and motility with the p53 response.</title>
        <authorList>
            <person name="Coutts A.S."/>
            <person name="Weston L."/>
            <person name="La Thangue N.B."/>
        </authorList>
    </citation>
    <scope>FUNCTION</scope>
    <scope>SUBCELLULAR LOCATION</scope>
</reference>
<reference key="9">
    <citation type="journal article" date="2010" name="Cell">
        <title>A tissue-specific atlas of mouse protein phosphorylation and expression.</title>
        <authorList>
            <person name="Huttlin E.L."/>
            <person name="Jedrychowski M.P."/>
            <person name="Elias J.E."/>
            <person name="Goswami T."/>
            <person name="Rad R."/>
            <person name="Beausoleil S.A."/>
            <person name="Villen J."/>
            <person name="Haas W."/>
            <person name="Sowa M.E."/>
            <person name="Gygi S.P."/>
        </authorList>
    </citation>
    <scope>PHOSPHORYLATION [LARGE SCALE ANALYSIS] AT SER-108; SER-883 AND SER-969</scope>
    <scope>IDENTIFICATION BY MASS SPECTROMETRY [LARGE SCALE ANALYSIS]</scope>
    <source>
        <tissue>Brain</tissue>
        <tissue>Heart</tissue>
        <tissue>Kidney</tissue>
        <tissue>Lung</tissue>
        <tissue>Spleen</tissue>
        <tissue>Testis</tissue>
    </source>
</reference>
<sequence length="983" mass="110586">MSFALEETLESDWVAVRPHVFDEREKHKFVFIVAWNEIEGKFAITCHNRTAQRQRSGSREQAGTPASDGSRGPGSPAARGRSEAAASATAALRSPGPRKSQAWAEGGSPRSARSLKGDPPRGPAGRGPESPLRSPARAKASPLRRSAESRDAIASATPVPPAPPVPPVSSVRVVSASGAVSEEIEVLEMVREDEAPQPLPDSEQPPSAAELESSAEECSWAGLFSFQDLRAVHQQLCSVNSQLEPCLPVFPEEPSGMWTVLFGGAPEMTEQEIDALCYQLQVYLGHGLDTCGWKILSQVLFTETDDPEEYYESLSELRQKGYEEVLQRARRRIQELLDKHKTIESMVELLDLYQMEDEAYSSLAEATTELYQYLLQPFRDMRELAMLRRQQIKISMENDYLGPRRIESLQKEDADWQRKAHMAVLSIQDLTVKYFEITAKAQKAVYDRMRADQKKFGKASWAAAAERMEKLQYAVSKETLQMMRAKEICLEQKKHALKEEMQSLQGGTEAIARLDQLESDYYDLQLQLYEVQFEILKCEELLLTAQLESIKRLISEKRDEVVYYDTYESMEAMLEKEEMAASVHAQREELQKLQQKARQLEARRGRVSAKKAYLRNKKEICIAKHHEKFQQRFQSEDEYRAHHTIQIKRDKLHDEEERKSAWVSQERQRTLDRLRTFKQRYPGQVILKSTRLRVAHSRRKSTASPVPCEEQCHSLPTVLQGQEKTEVGGGGSQLGPSQTAEPQSLVQLEDTSSEQLESTSLPPRAVVSSELPPPQSAPLLTSIDPKPCSVTIDPLPPPLPPTPPPPPPPPPPPPPPLPVAKDNGASTTAETLEKDALRTEGNERSIPKSASAPAAHLFDSSQLVSARKKLRKTVEGLQRRRVSSPMDEVLASLKRGSFHLKKVEQRTLPPFPDEDDSNNILAQIRKGVKLKKVQKEVLRESFTLLPDTDPLTRSIHEALRRIKEASPESEDEEEALPCTDWEN</sequence>
<dbReference type="EMBL" id="AF201390">
    <property type="protein sequence ID" value="AAF17555.1"/>
    <property type="molecule type" value="mRNA"/>
</dbReference>
<dbReference type="EMBL" id="BC020052">
    <property type="protein sequence ID" value="AAH20052.1"/>
    <property type="molecule type" value="mRNA"/>
</dbReference>
<dbReference type="EMBL" id="BC069906">
    <property type="protein sequence ID" value="AAH69906.1"/>
    <property type="status" value="ALT_SEQ"/>
    <property type="molecule type" value="mRNA"/>
</dbReference>
<dbReference type="EMBL" id="BC090835">
    <property type="protein sequence ID" value="AAH90835.1"/>
    <property type="molecule type" value="mRNA"/>
</dbReference>
<dbReference type="EMBL" id="AK035559">
    <property type="protein sequence ID" value="BAC29105.1"/>
    <property type="molecule type" value="mRNA"/>
</dbReference>
<dbReference type="EMBL" id="AK141957">
    <property type="protein sequence ID" value="BAE24898.1"/>
    <property type="molecule type" value="mRNA"/>
</dbReference>
<dbReference type="CCDS" id="CCDS26688.1">
    <molecule id="Q9QXM1-1"/>
</dbReference>
<dbReference type="RefSeq" id="NP_067285.2">
    <property type="nucleotide sequence ID" value="NM_021310.3"/>
</dbReference>
<dbReference type="BioGRID" id="208310">
    <property type="interactions" value="4"/>
</dbReference>
<dbReference type="FunCoup" id="Q9QXM1">
    <property type="interactions" value="1817"/>
</dbReference>
<dbReference type="IntAct" id="Q9QXM1">
    <property type="interactions" value="23"/>
</dbReference>
<dbReference type="MINT" id="Q9QXM1"/>
<dbReference type="STRING" id="10090.ENSMUSP00000070339"/>
<dbReference type="GlyGen" id="Q9QXM1">
    <property type="glycosylation" value="1 site"/>
</dbReference>
<dbReference type="iPTMnet" id="Q9QXM1"/>
<dbReference type="PhosphoSitePlus" id="Q9QXM1"/>
<dbReference type="jPOST" id="Q9QXM1"/>
<dbReference type="PaxDb" id="10090-ENSMUSP00000070339"/>
<dbReference type="PeptideAtlas" id="Q9QXM1"/>
<dbReference type="ProteomicsDB" id="269369">
    <molecule id="Q9QXM1-1"/>
</dbReference>
<dbReference type="ProteomicsDB" id="269370">
    <molecule id="Q9QXM1-2"/>
</dbReference>
<dbReference type="ProteomicsDB" id="269371">
    <molecule id="Q9QXM1-3"/>
</dbReference>
<dbReference type="Pumba" id="Q9QXM1"/>
<dbReference type="DNASU" id="57748"/>
<dbReference type="GeneID" id="57748"/>
<dbReference type="KEGG" id="mmu:57748"/>
<dbReference type="UCSC" id="uc007rlf.2">
    <molecule id="Q9QXM1-1"/>
    <property type="organism name" value="mouse"/>
</dbReference>
<dbReference type="AGR" id="MGI:1913096"/>
<dbReference type="CTD" id="133746"/>
<dbReference type="MGI" id="MGI:1913096">
    <property type="gene designation" value="Jmy"/>
</dbReference>
<dbReference type="eggNOG" id="ENOG502QRHU">
    <property type="taxonomic scope" value="Eukaryota"/>
</dbReference>
<dbReference type="InParanoid" id="Q9QXM1"/>
<dbReference type="OrthoDB" id="6284683at2759"/>
<dbReference type="PhylomeDB" id="Q9QXM1"/>
<dbReference type="TreeFam" id="TF331023"/>
<dbReference type="Reactome" id="R-MMU-6804760">
    <property type="pathway name" value="Regulation of TP53 Activity through Methylation"/>
</dbReference>
<dbReference type="BioGRID-ORCS" id="57748">
    <property type="hits" value="7 hits in 115 CRISPR screens"/>
</dbReference>
<dbReference type="ChiTaRS" id="Jmy">
    <property type="organism name" value="mouse"/>
</dbReference>
<dbReference type="PRO" id="PR:Q9QXM1"/>
<dbReference type="Proteomes" id="UP000000589">
    <property type="component" value="Unplaced"/>
</dbReference>
<dbReference type="RNAct" id="Q9QXM1">
    <property type="molecule type" value="protein"/>
</dbReference>
<dbReference type="GO" id="GO:0000421">
    <property type="term" value="C:autophagosome membrane"/>
    <property type="evidence" value="ECO:0000250"/>
    <property type="project" value="UniProtKB"/>
</dbReference>
<dbReference type="GO" id="GO:0031252">
    <property type="term" value="C:cell leading edge"/>
    <property type="evidence" value="ECO:0000250"/>
    <property type="project" value="UniProtKB"/>
</dbReference>
<dbReference type="GO" id="GO:0031410">
    <property type="term" value="C:cytoplasmic vesicle"/>
    <property type="evidence" value="ECO:0000250"/>
    <property type="project" value="UniProtKB"/>
</dbReference>
<dbReference type="GO" id="GO:0005856">
    <property type="term" value="C:cytoskeleton"/>
    <property type="evidence" value="ECO:0007669"/>
    <property type="project" value="UniProtKB-SubCell"/>
</dbReference>
<dbReference type="GO" id="GO:0012505">
    <property type="term" value="C:endomembrane system"/>
    <property type="evidence" value="ECO:0007669"/>
    <property type="project" value="UniProtKB-SubCell"/>
</dbReference>
<dbReference type="GO" id="GO:0005634">
    <property type="term" value="C:nucleus"/>
    <property type="evidence" value="ECO:0000314"/>
    <property type="project" value="UniProtKB"/>
</dbReference>
<dbReference type="GO" id="GO:0003779">
    <property type="term" value="F:actin binding"/>
    <property type="evidence" value="ECO:0007669"/>
    <property type="project" value="UniProtKB-KW"/>
</dbReference>
<dbReference type="GO" id="GO:0008017">
    <property type="term" value="F:microtubule binding"/>
    <property type="evidence" value="ECO:0000250"/>
    <property type="project" value="UniProtKB"/>
</dbReference>
<dbReference type="GO" id="GO:0003713">
    <property type="term" value="F:transcription coactivator activity"/>
    <property type="evidence" value="ECO:0000314"/>
    <property type="project" value="MGI"/>
</dbReference>
<dbReference type="GO" id="GO:0070060">
    <property type="term" value="P:'de novo' actin filament nucleation"/>
    <property type="evidence" value="ECO:0000314"/>
    <property type="project" value="UniProtKB"/>
</dbReference>
<dbReference type="GO" id="GO:0070358">
    <property type="term" value="P:actin polymerization-dependent cell motility"/>
    <property type="evidence" value="ECO:0000314"/>
    <property type="project" value="UniProtKB"/>
</dbReference>
<dbReference type="GO" id="GO:0034314">
    <property type="term" value="P:Arp2/3 complex-mediated actin nucleation"/>
    <property type="evidence" value="ECO:0000314"/>
    <property type="project" value="UniProtKB"/>
</dbReference>
<dbReference type="GO" id="GO:0009267">
    <property type="term" value="P:cellular response to starvation"/>
    <property type="evidence" value="ECO:0000250"/>
    <property type="project" value="UniProtKB"/>
</dbReference>
<dbReference type="GO" id="GO:0006281">
    <property type="term" value="P:DNA repair"/>
    <property type="evidence" value="ECO:0007669"/>
    <property type="project" value="UniProtKB-KW"/>
</dbReference>
<dbReference type="GO" id="GO:0072332">
    <property type="term" value="P:intrinsic apoptotic signaling pathway by p53 class mediator"/>
    <property type="evidence" value="ECO:0000314"/>
    <property type="project" value="MGI"/>
</dbReference>
<dbReference type="GO" id="GO:0043065">
    <property type="term" value="P:positive regulation of apoptotic process"/>
    <property type="evidence" value="ECO:0000314"/>
    <property type="project" value="UniProtKB"/>
</dbReference>
<dbReference type="GO" id="GO:0006357">
    <property type="term" value="P:regulation of transcription by RNA polymerase II"/>
    <property type="evidence" value="ECO:0000314"/>
    <property type="project" value="MGI"/>
</dbReference>
<dbReference type="InterPro" id="IPR031738">
    <property type="entry name" value="JMY/WHAMM"/>
</dbReference>
<dbReference type="InterPro" id="IPR031808">
    <property type="entry name" value="JMY/WHAMM_N"/>
</dbReference>
<dbReference type="InterPro" id="IPR003124">
    <property type="entry name" value="WH2_dom"/>
</dbReference>
<dbReference type="PANTHER" id="PTHR23330:SF8">
    <property type="entry name" value="JUNCTION-MEDIATING AND -REGULATORY PROTEIN"/>
    <property type="match status" value="1"/>
</dbReference>
<dbReference type="PANTHER" id="PTHR23330">
    <property type="entry name" value="P300 TRANSCRIPTIONAL COFACTOR JMY-RELATED"/>
    <property type="match status" value="1"/>
</dbReference>
<dbReference type="Pfam" id="PF15871">
    <property type="entry name" value="JMY"/>
    <property type="match status" value="1"/>
</dbReference>
<dbReference type="Pfam" id="PF15920">
    <property type="entry name" value="WHAMM-JMY_N"/>
    <property type="match status" value="2"/>
</dbReference>
<dbReference type="SUPFAM" id="SSF101447">
    <property type="entry name" value="Formin homology 2 domain (FH2 domain)"/>
    <property type="match status" value="1"/>
</dbReference>
<dbReference type="PROSITE" id="PS51082">
    <property type="entry name" value="WH2"/>
    <property type="match status" value="1"/>
</dbReference>
<feature type="chain" id="PRO_0000324612" description="Junction-mediating and -regulatory protein">
    <location>
        <begin position="1"/>
        <end position="983"/>
    </location>
</feature>
<feature type="domain" description="WH2" evidence="4">
    <location>
        <begin position="916"/>
        <end position="933"/>
    </location>
</feature>
<feature type="region of interest" description="Interaction with p300/EP300" evidence="6">
    <location>
        <begin position="1"/>
        <end position="119"/>
    </location>
</feature>
<feature type="region of interest" description="Disordered" evidence="5">
    <location>
        <begin position="50"/>
        <end position="167"/>
    </location>
</feature>
<feature type="region of interest" description="Interaction with p300/EP300" evidence="6">
    <location>
        <begin position="469"/>
        <end position="558"/>
    </location>
</feature>
<feature type="region of interest" description="Disordered" evidence="5">
    <location>
        <begin position="723"/>
        <end position="855"/>
    </location>
</feature>
<feature type="region of interest" description="Disordered" evidence="5">
    <location>
        <begin position="962"/>
        <end position="983"/>
    </location>
</feature>
<feature type="coiled-coil region" evidence="3">
    <location>
        <begin position="315"/>
        <end position="351"/>
    </location>
</feature>
<feature type="coiled-coil region" evidence="3">
    <location>
        <begin position="480"/>
        <end position="528"/>
    </location>
</feature>
<feature type="coiled-coil region" evidence="3">
    <location>
        <begin position="571"/>
        <end position="612"/>
    </location>
</feature>
<feature type="compositionally biased region" description="Polar residues" evidence="5">
    <location>
        <begin position="50"/>
        <end position="61"/>
    </location>
</feature>
<feature type="compositionally biased region" description="Low complexity" evidence="5">
    <location>
        <begin position="77"/>
        <end position="94"/>
    </location>
</feature>
<feature type="compositionally biased region" description="Pro residues" evidence="5">
    <location>
        <begin position="158"/>
        <end position="167"/>
    </location>
</feature>
<feature type="compositionally biased region" description="Polar residues" evidence="5">
    <location>
        <begin position="734"/>
        <end position="761"/>
    </location>
</feature>
<feature type="compositionally biased region" description="Pro residues" evidence="5">
    <location>
        <begin position="794"/>
        <end position="818"/>
    </location>
</feature>
<feature type="compositionally biased region" description="Basic and acidic residues" evidence="5">
    <location>
        <begin position="831"/>
        <end position="846"/>
    </location>
</feature>
<feature type="compositionally biased region" description="Acidic residues" evidence="5">
    <location>
        <begin position="967"/>
        <end position="983"/>
    </location>
</feature>
<feature type="modified residue" description="Phosphoserine" evidence="13">
    <location>
        <position position="108"/>
    </location>
</feature>
<feature type="modified residue" description="Phosphoserine" evidence="2">
    <location>
        <position position="114"/>
    </location>
</feature>
<feature type="modified residue" description="Phosphoserine" evidence="2">
    <location>
        <position position="704"/>
    </location>
</feature>
<feature type="modified residue" description="Phosphoserine" evidence="13">
    <location>
        <position position="883"/>
    </location>
</feature>
<feature type="modified residue" description="Phosphoserine" evidence="13">
    <location>
        <position position="969"/>
    </location>
</feature>
<feature type="splice variant" id="VSP_032311" description="In isoform 2." evidence="11">
    <original>VY</original>
    <variation>FP</variation>
    <location>
        <begin position="445"/>
        <end position="446"/>
    </location>
</feature>
<feature type="splice variant" id="VSP_032312" description="In isoform 2." evidence="11">
    <location>
        <begin position="447"/>
        <end position="983"/>
    </location>
</feature>
<feature type="splice variant" id="VSP_032313" description="In isoform 3." evidence="12">
    <location>
        <begin position="794"/>
        <end position="812"/>
    </location>
</feature>
<feature type="mutagenesis site" description="Decreases the activation of Arp2/3 without affecting the intrinsic nucleation activity." evidence="9">
    <original>W</original>
    <variation>A</variation>
    <location>
        <position position="981"/>
    </location>
</feature>
<feature type="sequence conflict" description="In Ref. 3; BAE24898." evidence="12" ref="3">
    <original>Q</original>
    <variation>H</variation>
    <location>
        <position position="54"/>
    </location>
</feature>
<feature type="sequence conflict" description="In Ref. 2; AAH20052." evidence="12" ref="2">
    <original>G</original>
    <variation>V</variation>
    <location>
        <position position="63"/>
    </location>
</feature>
<feature type="sequence conflict" description="In Ref. 3; BAE24898." evidence="12" ref="3">
    <original>S</original>
    <variation>R</variation>
    <location>
        <position position="70"/>
    </location>
</feature>
<feature type="sequence conflict" description="In Ref. 2; AAH20052/AAH90835 and 3; BAE24898." evidence="12" ref="2 3">
    <original>I</original>
    <variation>T</variation>
    <location>
        <position position="153"/>
    </location>
</feature>
<feature type="sequence conflict" description="In Ref. 2; AAH20052/AAH90835 and 3; BAE24898." evidence="12" ref="2 3">
    <original>V</original>
    <variation>A</variation>
    <location>
        <position position="159"/>
    </location>
</feature>
<feature type="sequence conflict" description="In Ref. 2; AAH20052." evidence="12" ref="2">
    <original>M</original>
    <variation>I</variation>
    <location>
        <position position="189"/>
    </location>
</feature>
<feature type="sequence conflict" description="In Ref. 2; AAH20052/AAH90835 and 3; BAE24898." evidence="12" ref="2 3">
    <original>S</original>
    <variation>P</variation>
    <location>
        <position position="214"/>
    </location>
</feature>
<feature type="sequence conflict" description="In Ref. 2; AAH20052." evidence="12" ref="2">
    <original>R</original>
    <variation>K</variation>
    <location>
        <position position="331"/>
    </location>
</feature>
<comment type="function">
    <text evidence="2 6 7 9 10">Acts both as a nuclear p53/TP53-cofactor and a cytoplasmic regulator of actin dynamics depending on conditions. In nucleus, acts as a cofactor that increases p53/TP53 response via its interaction with p300/EP300. Increases p53/TP53-dependent transcription and apoptosis, suggesting an important role in p53/TP53 stress response such as DNA damage. In cytoplasm, acts as a nucleation-promoting factor for both branched and unbranched actin filaments. Activates the Arp2/3 complex to induce branched actin filament networks. Also catalyzes actin polymerization in the absence of Arp2/3, creating unbranched filaments. Contributes to cell motility by controlling actin dynamics. May promote the rapid formation of a branched actin network by first nucleating new mother filaments and then activating Arp2/3 to branch off these filaments. Upon nutrient stress, directly recruited by MAP1LC3B to the phagophore membrane surfaces to promote actin assembly during autophagy (By similarity). The p53/TP53-cofactor and actin activator activities are regulated via its subcellular location.</text>
</comment>
<comment type="subunit">
    <text evidence="2 6 7">Interacts with p300/EP300, the complex activates p53/TP53 transcriptional activity (PubMed:10518217, PubMed:11511361). Interacts with TTC5/STRAP; the interaction takes place in the nucleus and facilitates the association between JMY and p300/EP300 (PubMed:11511361). Interacts with TTC5/STRAP; the interaction takes place in the cytoplasm and results in the inhibition of JYM's nucleation activity (By similarity). Interacts with MAP1LC3B; the interaction results in the activation of JYM's nucleation activity in the cytoplasm (By similarity).</text>
</comment>
<comment type="interaction">
    <interactant intactId="EBI-866001">
        <id>Q9QXM1</id>
    </interactant>
    <interactant intactId="EBI-447295">
        <id>Q09472</id>
        <label>EP300</label>
    </interactant>
    <organismsDiffer>true</organismsDiffer>
    <experiments>16</experiments>
</comment>
<comment type="subcellular location">
    <subcellularLocation>
        <location evidence="9 10">Nucleus</location>
    </subcellularLocation>
    <subcellularLocation>
        <location evidence="2">Cytoplasmic vesicle</location>
    </subcellularLocation>
    <subcellularLocation>
        <location evidence="2">Cytoplasm</location>
        <location evidence="2">Cytoskeleton</location>
    </subcellularLocation>
    <subcellularLocation>
        <location>Endomembrane system</location>
        <topology>Lipid-anchor</topology>
    </subcellularLocation>
    <subcellularLocation>
        <location evidence="2">Cytoplasmic vesicle</location>
        <location evidence="2">Autophagosome membrane</location>
    </subcellularLocation>
    <text evidence="1 2">Localizes to the nucleus in most cell types. In primary neutrophils, it colocalizes with actin filaments at the leading edge and is excluded from the nucleus. Localization correlates with motility, because it moves from the nucleus to the cytoplasmic compartment when cells are differentiated from nonmotile cells into highly motile neutrophil-like cells (By similarity). Accumulates in nucleus under DNA damage conditions, increasing p53/TP53 transcription response and reducing its influence on cell motility. Localizes to cytoplasmic vesicles which associate with actin filament and autophagosomal membranes upon starvation-induced autophagy (By similarity).</text>
</comment>
<comment type="alternative products">
    <event type="alternative splicing"/>
    <isoform>
        <id>Q9QXM1-1</id>
        <name>1</name>
        <sequence type="displayed"/>
    </isoform>
    <isoform>
        <id>Q9QXM1-2</id>
        <name>2</name>
        <sequence type="described" ref="VSP_032311 VSP_032312"/>
    </isoform>
    <isoform>
        <id>Q9QXM1-3</id>
        <name>3</name>
        <name>DeltaP</name>
        <sequence type="described" ref="VSP_032313"/>
    </isoform>
</comment>
<comment type="tissue specificity">
    <text evidence="6">Widely expressed, except in testis where it is expressed at low level.</text>
</comment>
<comment type="induction">
    <text evidence="8">Accumulates in DNA-damaged cells (at protein level).</text>
</comment>
<comment type="domain">
    <text evidence="2">The N-terminal region is involved in actin binding and actin nucleation activity.</text>
</comment>
<comment type="PTM">
    <text evidence="8">Ubiquitinated by MDM2, leading to its subsequent degradation by the proteasome. In case of DNA damage, the interaction with MDM2 is altered, preventing degradation and allowing interaction with p300/EP300 and its function in p53/TP53 stress response.</text>
</comment>
<comment type="miscellaneous">
    <molecule>Isoform 3</molecule>
    <text evidence="12">Alters the p53/TP53 response.</text>
</comment>
<comment type="similarity">
    <text evidence="12">Belongs to the JMY family.</text>
</comment>
<comment type="sequence caution" evidence="12">
    <conflict type="miscellaneous discrepancy">
        <sequence resource="EMBL-CDS" id="AAH69906"/>
    </conflict>
    <text>Contaminating sequence. Potential poly-A sequence.</text>
</comment>
<proteinExistence type="evidence at protein level"/>
<organism>
    <name type="scientific">Mus musculus</name>
    <name type="common">Mouse</name>
    <dbReference type="NCBI Taxonomy" id="10090"/>
    <lineage>
        <taxon>Eukaryota</taxon>
        <taxon>Metazoa</taxon>
        <taxon>Chordata</taxon>
        <taxon>Craniata</taxon>
        <taxon>Vertebrata</taxon>
        <taxon>Euteleostomi</taxon>
        <taxon>Mammalia</taxon>
        <taxon>Eutheria</taxon>
        <taxon>Euarchontoglires</taxon>
        <taxon>Glires</taxon>
        <taxon>Rodentia</taxon>
        <taxon>Myomorpha</taxon>
        <taxon>Muroidea</taxon>
        <taxon>Muridae</taxon>
        <taxon>Murinae</taxon>
        <taxon>Mus</taxon>
        <taxon>Mus</taxon>
    </lineage>
</organism>
<keyword id="KW-0009">Actin-binding</keyword>
<keyword id="KW-0025">Alternative splicing</keyword>
<keyword id="KW-0175">Coiled coil</keyword>
<keyword id="KW-0963">Cytoplasm</keyword>
<keyword id="KW-0968">Cytoplasmic vesicle</keyword>
<keyword id="KW-0206">Cytoskeleton</keyword>
<keyword id="KW-0227">DNA damage</keyword>
<keyword id="KW-0234">DNA repair</keyword>
<keyword id="KW-0449">Lipoprotein</keyword>
<keyword id="KW-0472">Membrane</keyword>
<keyword id="KW-0539">Nucleus</keyword>
<keyword id="KW-0597">Phosphoprotein</keyword>
<keyword id="KW-1185">Reference proteome</keyword>
<keyword id="KW-0832">Ubl conjugation</keyword>